<reference key="1">
    <citation type="submission" date="2006-03" db="EMBL/GenBank/DDBJ databases">
        <title>Complete sequence of Methylobacillus flagellatus KT.</title>
        <authorList>
            <consortium name="US DOE Joint Genome Institute"/>
            <person name="Copeland A."/>
            <person name="Lucas S."/>
            <person name="Lapidus A."/>
            <person name="Barry K."/>
            <person name="Detter J.C."/>
            <person name="Glavina del Rio T."/>
            <person name="Hammon N."/>
            <person name="Israni S."/>
            <person name="Dalin E."/>
            <person name="Tice H."/>
            <person name="Pitluck S."/>
            <person name="Brettin T."/>
            <person name="Bruce D."/>
            <person name="Han C."/>
            <person name="Tapia R."/>
            <person name="Saunders E."/>
            <person name="Gilna P."/>
            <person name="Schmutz J."/>
            <person name="Larimer F."/>
            <person name="Land M."/>
            <person name="Kyrpides N."/>
            <person name="Anderson I."/>
            <person name="Richardson P."/>
        </authorList>
    </citation>
    <scope>NUCLEOTIDE SEQUENCE [LARGE SCALE GENOMIC DNA]</scope>
    <source>
        <strain>ATCC 51484 / DSM 6875 / VKM B-1610 / KT</strain>
    </source>
</reference>
<sequence>MKVIVLGSGVIGVTAAWYLAEAGHEVIVLDRQPGPALETSYANAGQVSPGYASPWAAPGIPLKAIKWMLRRHAPLFIKPDGTWQQLRWMWQLLQNCTGTRYEQNKARMVRLAEYSRDCLDQLRADTGIEYEGRQRGTLQLFRTREQLDAALRDIEVLRFAHVPFELLPPSLLTKAEPALEHVKHKLTGGLWLPRDETGDCRLFTVRLADMAAARGVQFRYGQEISHLAIESGNVNGVVVSGVRVQADAYVVALAAYSVDVLKGVLDLPVYPVKGYSITVPIIDEALAPVSTVLDETYKTAVTRFDNRIRVGGMAELVGFDRRLSPRREGTLKLIVHDLFPGAADLSQTSFWTGLRPMTPDGPPIIGATPIPNLYLNTGHGTLGWTMACGSGKLLADIISGKKTDIQHDDLGIGRYAK</sequence>
<organism>
    <name type="scientific">Methylobacillus flagellatus (strain ATCC 51484 / DSM 6875 / VKM B-1610 / KT)</name>
    <dbReference type="NCBI Taxonomy" id="265072"/>
    <lineage>
        <taxon>Bacteria</taxon>
        <taxon>Pseudomonadati</taxon>
        <taxon>Pseudomonadota</taxon>
        <taxon>Betaproteobacteria</taxon>
        <taxon>Nitrosomonadales</taxon>
        <taxon>Methylophilaceae</taxon>
        <taxon>Methylobacillus</taxon>
    </lineage>
</organism>
<name>DADA_METFK</name>
<protein>
    <recommendedName>
        <fullName evidence="1">D-amino acid dehydrogenase</fullName>
        <ecNumber evidence="1">1.4.99.-</ecNumber>
    </recommendedName>
</protein>
<feature type="chain" id="PRO_1000066099" description="D-amino acid dehydrogenase">
    <location>
        <begin position="1"/>
        <end position="417"/>
    </location>
</feature>
<feature type="binding site" evidence="1">
    <location>
        <begin position="3"/>
        <end position="17"/>
    </location>
    <ligand>
        <name>FAD</name>
        <dbReference type="ChEBI" id="CHEBI:57692"/>
    </ligand>
</feature>
<dbReference type="EC" id="1.4.99.-" evidence="1"/>
<dbReference type="EMBL" id="CP000284">
    <property type="protein sequence ID" value="ABE49059.1"/>
    <property type="molecule type" value="Genomic_DNA"/>
</dbReference>
<dbReference type="RefSeq" id="WP_011479156.1">
    <property type="nucleotide sequence ID" value="NC_007947.1"/>
</dbReference>
<dbReference type="SMR" id="Q1H378"/>
<dbReference type="STRING" id="265072.Mfla_0791"/>
<dbReference type="KEGG" id="mfa:Mfla_0791"/>
<dbReference type="eggNOG" id="COG0665">
    <property type="taxonomic scope" value="Bacteria"/>
</dbReference>
<dbReference type="HOGENOM" id="CLU_007884_9_2_4"/>
<dbReference type="OrthoDB" id="18526at2"/>
<dbReference type="UniPathway" id="UPA00043">
    <property type="reaction ID" value="UER00498"/>
</dbReference>
<dbReference type="Proteomes" id="UP000002440">
    <property type="component" value="Chromosome"/>
</dbReference>
<dbReference type="GO" id="GO:0005737">
    <property type="term" value="C:cytoplasm"/>
    <property type="evidence" value="ECO:0007669"/>
    <property type="project" value="TreeGrafter"/>
</dbReference>
<dbReference type="GO" id="GO:0005886">
    <property type="term" value="C:plasma membrane"/>
    <property type="evidence" value="ECO:0007669"/>
    <property type="project" value="TreeGrafter"/>
</dbReference>
<dbReference type="GO" id="GO:0008718">
    <property type="term" value="F:D-amino-acid dehydrogenase activity"/>
    <property type="evidence" value="ECO:0007669"/>
    <property type="project" value="UniProtKB-UniRule"/>
</dbReference>
<dbReference type="GO" id="GO:0055130">
    <property type="term" value="P:D-alanine catabolic process"/>
    <property type="evidence" value="ECO:0007669"/>
    <property type="project" value="UniProtKB-UniPathway"/>
</dbReference>
<dbReference type="FunFam" id="3.50.50.60:FF:000020">
    <property type="entry name" value="D-amino acid dehydrogenase"/>
    <property type="match status" value="1"/>
</dbReference>
<dbReference type="Gene3D" id="3.30.9.10">
    <property type="entry name" value="D-Amino Acid Oxidase, subunit A, domain 2"/>
    <property type="match status" value="1"/>
</dbReference>
<dbReference type="Gene3D" id="3.50.50.60">
    <property type="entry name" value="FAD/NAD(P)-binding domain"/>
    <property type="match status" value="2"/>
</dbReference>
<dbReference type="HAMAP" id="MF_01202">
    <property type="entry name" value="DadA"/>
    <property type="match status" value="1"/>
</dbReference>
<dbReference type="InterPro" id="IPR023080">
    <property type="entry name" value="DadA"/>
</dbReference>
<dbReference type="InterPro" id="IPR006076">
    <property type="entry name" value="FAD-dep_OxRdtase"/>
</dbReference>
<dbReference type="InterPro" id="IPR036188">
    <property type="entry name" value="FAD/NAD-bd_sf"/>
</dbReference>
<dbReference type="NCBIfam" id="NF001933">
    <property type="entry name" value="PRK00711.1"/>
    <property type="match status" value="1"/>
</dbReference>
<dbReference type="PANTHER" id="PTHR13847:SF280">
    <property type="entry name" value="D-AMINO ACID DEHYDROGENASE"/>
    <property type="match status" value="1"/>
</dbReference>
<dbReference type="PANTHER" id="PTHR13847">
    <property type="entry name" value="SARCOSINE DEHYDROGENASE-RELATED"/>
    <property type="match status" value="1"/>
</dbReference>
<dbReference type="Pfam" id="PF01266">
    <property type="entry name" value="DAO"/>
    <property type="match status" value="1"/>
</dbReference>
<dbReference type="SUPFAM" id="SSF54373">
    <property type="entry name" value="FAD-linked reductases, C-terminal domain"/>
    <property type="match status" value="1"/>
</dbReference>
<dbReference type="SUPFAM" id="SSF51971">
    <property type="entry name" value="Nucleotide-binding domain"/>
    <property type="match status" value="1"/>
</dbReference>
<proteinExistence type="inferred from homology"/>
<accession>Q1H378</accession>
<comment type="function">
    <text evidence="1">Oxidative deamination of D-amino acids.</text>
</comment>
<comment type="catalytic activity">
    <reaction evidence="1">
        <text>a D-alpha-amino acid + A + H2O = a 2-oxocarboxylate + AH2 + NH4(+)</text>
        <dbReference type="Rhea" id="RHEA:18125"/>
        <dbReference type="ChEBI" id="CHEBI:13193"/>
        <dbReference type="ChEBI" id="CHEBI:15377"/>
        <dbReference type="ChEBI" id="CHEBI:17499"/>
        <dbReference type="ChEBI" id="CHEBI:28938"/>
        <dbReference type="ChEBI" id="CHEBI:35179"/>
        <dbReference type="ChEBI" id="CHEBI:59871"/>
    </reaction>
</comment>
<comment type="cofactor">
    <cofactor evidence="1">
        <name>FAD</name>
        <dbReference type="ChEBI" id="CHEBI:57692"/>
    </cofactor>
</comment>
<comment type="pathway">
    <text>Amino-acid degradation; D-alanine degradation; NH(3) and pyruvate from D-alanine: step 1/1.</text>
</comment>
<comment type="similarity">
    <text evidence="1">Belongs to the DadA oxidoreductase family.</text>
</comment>
<evidence type="ECO:0000255" key="1">
    <source>
        <dbReference type="HAMAP-Rule" id="MF_01202"/>
    </source>
</evidence>
<gene>
    <name evidence="1" type="primary">dadA</name>
    <name type="ordered locus">Mfla_0791</name>
</gene>
<keyword id="KW-0274">FAD</keyword>
<keyword id="KW-0285">Flavoprotein</keyword>
<keyword id="KW-0560">Oxidoreductase</keyword>
<keyword id="KW-1185">Reference proteome</keyword>